<name>LOLA_YERPG</name>
<accession>A9R5V0</accession>
<organism>
    <name type="scientific">Yersinia pestis bv. Antiqua (strain Angola)</name>
    <dbReference type="NCBI Taxonomy" id="349746"/>
    <lineage>
        <taxon>Bacteria</taxon>
        <taxon>Pseudomonadati</taxon>
        <taxon>Pseudomonadota</taxon>
        <taxon>Gammaproteobacteria</taxon>
        <taxon>Enterobacterales</taxon>
        <taxon>Yersiniaceae</taxon>
        <taxon>Yersinia</taxon>
    </lineage>
</organism>
<feature type="signal peptide" evidence="1">
    <location>
        <begin position="1"/>
        <end position="21"/>
    </location>
</feature>
<feature type="chain" id="PRO_1000100731" description="Outer-membrane lipoprotein carrier protein">
    <location>
        <begin position="22"/>
        <end position="202"/>
    </location>
</feature>
<comment type="function">
    <text evidence="1">Participates in the translocation of lipoproteins from the inner membrane to the outer membrane. Only forms a complex with a lipoprotein if the residue after the N-terminal Cys is not an aspartate (The Asp acts as a targeting signal to indicate that the lipoprotein should stay in the inner membrane).</text>
</comment>
<comment type="subunit">
    <text evidence="1">Monomer.</text>
</comment>
<comment type="subcellular location">
    <subcellularLocation>
        <location evidence="1">Periplasm</location>
    </subcellularLocation>
</comment>
<comment type="similarity">
    <text evidence="1">Belongs to the LolA family.</text>
</comment>
<protein>
    <recommendedName>
        <fullName evidence="1">Outer-membrane lipoprotein carrier protein</fullName>
    </recommendedName>
</protein>
<proteinExistence type="inferred from homology"/>
<sequence length="202" mass="22242">MKRLLVACCFLSGLISASALADASTDLQNRLSKVNSFHASFSQAVTSSDGAVVQEGEGELWVKRPNLFNWHMTSPDESVLISDGETLWFYNPFVEQATATWLKNATGNTPFMLITRNNPDDWKQYNVKQKGDDFELTPKSASGNLKQFAISVTPSGTIKSFTAVEQDGQRSAYTLKSQQSSVVDASKFTFTPPKGVTLDDQR</sequence>
<gene>
    <name evidence="1" type="primary">lolA</name>
    <name type="ordered locus">YpAngola_A1614</name>
</gene>
<evidence type="ECO:0000255" key="1">
    <source>
        <dbReference type="HAMAP-Rule" id="MF_00240"/>
    </source>
</evidence>
<keyword id="KW-0143">Chaperone</keyword>
<keyword id="KW-0574">Periplasm</keyword>
<keyword id="KW-0653">Protein transport</keyword>
<keyword id="KW-0732">Signal</keyword>
<keyword id="KW-0813">Transport</keyword>
<dbReference type="EMBL" id="CP000901">
    <property type="protein sequence ID" value="ABX86434.1"/>
    <property type="molecule type" value="Genomic_DNA"/>
</dbReference>
<dbReference type="RefSeq" id="WP_002211338.1">
    <property type="nucleotide sequence ID" value="NZ_CP009935.1"/>
</dbReference>
<dbReference type="SMR" id="A9R5V0"/>
<dbReference type="GeneID" id="57977173"/>
<dbReference type="KEGG" id="ypg:YpAngola_A1614"/>
<dbReference type="PATRIC" id="fig|349746.12.peg.2580"/>
<dbReference type="GO" id="GO:0030288">
    <property type="term" value="C:outer membrane-bounded periplasmic space"/>
    <property type="evidence" value="ECO:0007669"/>
    <property type="project" value="TreeGrafter"/>
</dbReference>
<dbReference type="GO" id="GO:0044874">
    <property type="term" value="P:lipoprotein localization to outer membrane"/>
    <property type="evidence" value="ECO:0007669"/>
    <property type="project" value="UniProtKB-UniRule"/>
</dbReference>
<dbReference type="GO" id="GO:0042953">
    <property type="term" value="P:lipoprotein transport"/>
    <property type="evidence" value="ECO:0007669"/>
    <property type="project" value="InterPro"/>
</dbReference>
<dbReference type="CDD" id="cd16325">
    <property type="entry name" value="LolA"/>
    <property type="match status" value="1"/>
</dbReference>
<dbReference type="FunFam" id="2.50.20.10:FF:000001">
    <property type="entry name" value="Outer-membrane lipoprotein carrier protein"/>
    <property type="match status" value="1"/>
</dbReference>
<dbReference type="Gene3D" id="2.50.20.10">
    <property type="entry name" value="Lipoprotein localisation LolA/LolB/LppX"/>
    <property type="match status" value="1"/>
</dbReference>
<dbReference type="HAMAP" id="MF_00240">
    <property type="entry name" value="LolA"/>
    <property type="match status" value="1"/>
</dbReference>
<dbReference type="InterPro" id="IPR029046">
    <property type="entry name" value="LolA/LolB/LppX"/>
</dbReference>
<dbReference type="InterPro" id="IPR004564">
    <property type="entry name" value="OM_lipoprot_carrier_LolA-like"/>
</dbReference>
<dbReference type="InterPro" id="IPR018323">
    <property type="entry name" value="OM_lipoprot_carrier_LolA_Pbac"/>
</dbReference>
<dbReference type="NCBIfam" id="TIGR00547">
    <property type="entry name" value="lolA"/>
    <property type="match status" value="1"/>
</dbReference>
<dbReference type="PANTHER" id="PTHR35869">
    <property type="entry name" value="OUTER-MEMBRANE LIPOPROTEIN CARRIER PROTEIN"/>
    <property type="match status" value="1"/>
</dbReference>
<dbReference type="PANTHER" id="PTHR35869:SF1">
    <property type="entry name" value="OUTER-MEMBRANE LIPOPROTEIN CARRIER PROTEIN"/>
    <property type="match status" value="1"/>
</dbReference>
<dbReference type="Pfam" id="PF03548">
    <property type="entry name" value="LolA"/>
    <property type="match status" value="1"/>
</dbReference>
<dbReference type="SUPFAM" id="SSF89392">
    <property type="entry name" value="Prokaryotic lipoproteins and lipoprotein localization factors"/>
    <property type="match status" value="1"/>
</dbReference>
<reference key="1">
    <citation type="journal article" date="2010" name="J. Bacteriol.">
        <title>Genome sequence of the deep-rooted Yersinia pestis strain Angola reveals new insights into the evolution and pangenome of the plague bacterium.</title>
        <authorList>
            <person name="Eppinger M."/>
            <person name="Worsham P.L."/>
            <person name="Nikolich M.P."/>
            <person name="Riley D.R."/>
            <person name="Sebastian Y."/>
            <person name="Mou S."/>
            <person name="Achtman M."/>
            <person name="Lindler L.E."/>
            <person name="Ravel J."/>
        </authorList>
    </citation>
    <scope>NUCLEOTIDE SEQUENCE [LARGE SCALE GENOMIC DNA]</scope>
    <source>
        <strain>Angola</strain>
    </source>
</reference>